<proteinExistence type="evidence at transcript level"/>
<evidence type="ECO:0000250" key="1"/>
<evidence type="ECO:0000255" key="2">
    <source>
        <dbReference type="PROSITE-ProRule" id="PRU01230"/>
    </source>
</evidence>
<evidence type="ECO:0000256" key="3">
    <source>
        <dbReference type="SAM" id="MobiDB-lite"/>
    </source>
</evidence>
<evidence type="ECO:0000305" key="4"/>
<protein>
    <recommendedName>
        <fullName>Guanine nucleotide-binding protein G(s) subunit alpha</fullName>
    </recommendedName>
    <alternativeName>
        <fullName>Adenylate cyclase-stimulating G alpha protein</fullName>
    </alternativeName>
</protein>
<organism>
    <name type="scientific">Homarus americanus</name>
    <name type="common">American lobster</name>
    <dbReference type="NCBI Taxonomy" id="6706"/>
    <lineage>
        <taxon>Eukaryota</taxon>
        <taxon>Metazoa</taxon>
        <taxon>Ecdysozoa</taxon>
        <taxon>Arthropoda</taxon>
        <taxon>Crustacea</taxon>
        <taxon>Multicrustacea</taxon>
        <taxon>Malacostraca</taxon>
        <taxon>Eumalacostraca</taxon>
        <taxon>Eucarida</taxon>
        <taxon>Decapoda</taxon>
        <taxon>Pleocyemata</taxon>
        <taxon>Astacidea</taxon>
        <taxon>Nephropoidea</taxon>
        <taxon>Nephropidae</taxon>
        <taxon>Homarus</taxon>
    </lineage>
</organism>
<accession>O16118</accession>
<sequence length="379" mass="44425">MGCFGSAGAKGDAEENKKRKEANKNINKQIQKDKQVYRATHRLLLLGAGESGKSTIVKQMRILHVDGFSEEEKREKIHAIRCNIRDAILTITGNMSTLTPPIALENPAHQFRVDYIQDVASQKDFDYPEEFYEHTEMLWKDKGVQACYERANEYQLIDCAKYFLDRVHIVRQTDYTPTEQDILRCRVLTLGIFETRFQVDKVNFHMFDVGGQRDERRKWIQCFNDVTAIIFVTACSSYNMVLREDPSQNRLRESLDLFKSIWNNRWLRTISVILFLNKQDLLAEKIRAGKSKLEDYFPDFARYQTPLDATVEPGEDPEVVRAKYFIRDEFLRISTASGDGKHYCYPHFTCAVDTENIRRVFNDCRDIIQRMHLRQYELL</sequence>
<name>GNAS_HOMAM</name>
<keyword id="KW-0342">GTP-binding</keyword>
<keyword id="KW-0449">Lipoprotein</keyword>
<keyword id="KW-0460">Magnesium</keyword>
<keyword id="KW-0479">Metal-binding</keyword>
<keyword id="KW-0547">Nucleotide-binding</keyword>
<keyword id="KW-0564">Palmitate</keyword>
<keyword id="KW-0807">Transducer</keyword>
<dbReference type="EMBL" id="AF010292">
    <property type="protein sequence ID" value="AAB66332.1"/>
    <property type="molecule type" value="mRNA"/>
</dbReference>
<dbReference type="SMR" id="O16118"/>
<dbReference type="OrthoDB" id="5817230at2759"/>
<dbReference type="GO" id="GO:0005737">
    <property type="term" value="C:cytoplasm"/>
    <property type="evidence" value="ECO:0007669"/>
    <property type="project" value="TreeGrafter"/>
</dbReference>
<dbReference type="GO" id="GO:0005834">
    <property type="term" value="C:heterotrimeric G-protein complex"/>
    <property type="evidence" value="ECO:0007669"/>
    <property type="project" value="TreeGrafter"/>
</dbReference>
<dbReference type="GO" id="GO:0001664">
    <property type="term" value="F:G protein-coupled receptor binding"/>
    <property type="evidence" value="ECO:0007669"/>
    <property type="project" value="TreeGrafter"/>
</dbReference>
<dbReference type="GO" id="GO:0031683">
    <property type="term" value="F:G-protein beta/gamma-subunit complex binding"/>
    <property type="evidence" value="ECO:0007669"/>
    <property type="project" value="InterPro"/>
</dbReference>
<dbReference type="GO" id="GO:0005525">
    <property type="term" value="F:GTP binding"/>
    <property type="evidence" value="ECO:0007669"/>
    <property type="project" value="UniProtKB-KW"/>
</dbReference>
<dbReference type="GO" id="GO:0003924">
    <property type="term" value="F:GTPase activity"/>
    <property type="evidence" value="ECO:0007669"/>
    <property type="project" value="InterPro"/>
</dbReference>
<dbReference type="GO" id="GO:0046872">
    <property type="term" value="F:metal ion binding"/>
    <property type="evidence" value="ECO:0007669"/>
    <property type="project" value="UniProtKB-KW"/>
</dbReference>
<dbReference type="GO" id="GO:0007191">
    <property type="term" value="P:adenylate cyclase-activating dopamine receptor signaling pathway"/>
    <property type="evidence" value="ECO:0007669"/>
    <property type="project" value="TreeGrafter"/>
</dbReference>
<dbReference type="GO" id="GO:0007606">
    <property type="term" value="P:sensory perception of chemical stimulus"/>
    <property type="evidence" value="ECO:0007669"/>
    <property type="project" value="TreeGrafter"/>
</dbReference>
<dbReference type="CDD" id="cd00066">
    <property type="entry name" value="G-alpha"/>
    <property type="match status" value="1"/>
</dbReference>
<dbReference type="FunFam" id="3.40.50.300:FF:000720">
    <property type="entry name" value="Guanine nucleotide-binding protein G(k) subunit alpha"/>
    <property type="match status" value="1"/>
</dbReference>
<dbReference type="FunFam" id="1.10.400.10:FF:000003">
    <property type="entry name" value="Guanine nucleotide-binding protein G(S) subunit alpha"/>
    <property type="match status" value="1"/>
</dbReference>
<dbReference type="FunFam" id="3.40.50.300:FF:006178">
    <property type="entry name" value="Guanine nucleotide-binding protein G(s) subunit alpha isoforms short"/>
    <property type="match status" value="1"/>
</dbReference>
<dbReference type="Gene3D" id="1.10.400.10">
    <property type="entry name" value="GI Alpha 1, domain 2-like"/>
    <property type="match status" value="1"/>
</dbReference>
<dbReference type="Gene3D" id="3.40.50.300">
    <property type="entry name" value="P-loop containing nucleotide triphosphate hydrolases"/>
    <property type="match status" value="1"/>
</dbReference>
<dbReference type="InterPro" id="IPR000367">
    <property type="entry name" value="Gprotein_alpha_S"/>
</dbReference>
<dbReference type="InterPro" id="IPR001019">
    <property type="entry name" value="Gprotein_alpha_su"/>
</dbReference>
<dbReference type="InterPro" id="IPR011025">
    <property type="entry name" value="GproteinA_insert"/>
</dbReference>
<dbReference type="InterPro" id="IPR027417">
    <property type="entry name" value="P-loop_NTPase"/>
</dbReference>
<dbReference type="PANTHER" id="PTHR10218:SF212">
    <property type="entry name" value="G PROTEIN ALPHA S SUBUNIT"/>
    <property type="match status" value="1"/>
</dbReference>
<dbReference type="PANTHER" id="PTHR10218">
    <property type="entry name" value="GTP-BINDING PROTEIN ALPHA SUBUNIT"/>
    <property type="match status" value="1"/>
</dbReference>
<dbReference type="Pfam" id="PF00503">
    <property type="entry name" value="G-alpha"/>
    <property type="match status" value="1"/>
</dbReference>
<dbReference type="PRINTS" id="PR00318">
    <property type="entry name" value="GPROTEINA"/>
</dbReference>
<dbReference type="PRINTS" id="PR00443">
    <property type="entry name" value="GPROTEINAS"/>
</dbReference>
<dbReference type="SMART" id="SM00275">
    <property type="entry name" value="G_alpha"/>
    <property type="match status" value="1"/>
</dbReference>
<dbReference type="SUPFAM" id="SSF52540">
    <property type="entry name" value="P-loop containing nucleoside triphosphate hydrolases"/>
    <property type="match status" value="1"/>
</dbReference>
<dbReference type="SUPFAM" id="SSF47895">
    <property type="entry name" value="Transducin (alpha subunit), insertion domain"/>
    <property type="match status" value="1"/>
</dbReference>
<dbReference type="PROSITE" id="PS51882">
    <property type="entry name" value="G_ALPHA"/>
    <property type="match status" value="1"/>
</dbReference>
<feature type="initiator methionine" description="Removed" evidence="1">
    <location>
        <position position="1"/>
    </location>
</feature>
<feature type="chain" id="PRO_0000203727" description="Guanine nucleotide-binding protein G(s) subunit alpha">
    <location>
        <begin position="2"/>
        <end position="379"/>
    </location>
</feature>
<feature type="domain" description="G-alpha" evidence="2">
    <location>
        <begin position="39"/>
        <end position="379"/>
    </location>
</feature>
<feature type="region of interest" description="Disordered" evidence="3">
    <location>
        <begin position="1"/>
        <end position="29"/>
    </location>
</feature>
<feature type="region of interest" description="G1 motif" evidence="2">
    <location>
        <begin position="42"/>
        <end position="55"/>
    </location>
</feature>
<feature type="region of interest" description="G2 motif" evidence="2">
    <location>
        <begin position="181"/>
        <end position="189"/>
    </location>
</feature>
<feature type="region of interest" description="G3 motif" evidence="2">
    <location>
        <begin position="204"/>
        <end position="213"/>
    </location>
</feature>
<feature type="region of interest" description="G4 motif" evidence="2">
    <location>
        <begin position="273"/>
        <end position="280"/>
    </location>
</feature>
<feature type="region of interest" description="G5 motif" evidence="2">
    <location>
        <begin position="349"/>
        <end position="354"/>
    </location>
</feature>
<feature type="binding site" evidence="1">
    <location>
        <begin position="47"/>
        <end position="54"/>
    </location>
    <ligand>
        <name>GTP</name>
        <dbReference type="ChEBI" id="CHEBI:37565"/>
    </ligand>
</feature>
<feature type="binding site" evidence="1">
    <location>
        <position position="54"/>
    </location>
    <ligand>
        <name>Mg(2+)</name>
        <dbReference type="ChEBI" id="CHEBI:18420"/>
    </ligand>
</feature>
<feature type="binding site" evidence="1">
    <location>
        <begin position="183"/>
        <end position="189"/>
    </location>
    <ligand>
        <name>GTP</name>
        <dbReference type="ChEBI" id="CHEBI:37565"/>
    </ligand>
</feature>
<feature type="binding site" evidence="1">
    <location>
        <position position="189"/>
    </location>
    <ligand>
        <name>Mg(2+)</name>
        <dbReference type="ChEBI" id="CHEBI:18420"/>
    </ligand>
</feature>
<feature type="binding site" evidence="1">
    <location>
        <begin position="208"/>
        <end position="212"/>
    </location>
    <ligand>
        <name>GTP</name>
        <dbReference type="ChEBI" id="CHEBI:37565"/>
    </ligand>
</feature>
<feature type="binding site" evidence="1">
    <location>
        <begin position="277"/>
        <end position="280"/>
    </location>
    <ligand>
        <name>GTP</name>
        <dbReference type="ChEBI" id="CHEBI:37565"/>
    </ligand>
</feature>
<feature type="binding site" evidence="1">
    <location>
        <position position="351"/>
    </location>
    <ligand>
        <name>GTP</name>
        <dbReference type="ChEBI" id="CHEBI:37565"/>
    </ligand>
</feature>
<feature type="lipid moiety-binding region" description="N-palmitoyl glycine" evidence="1">
    <location>
        <position position="2"/>
    </location>
</feature>
<feature type="lipid moiety-binding region" description="S-palmitoyl cysteine" evidence="1">
    <location>
        <position position="3"/>
    </location>
</feature>
<reference key="1">
    <citation type="journal article" date="1997" name="J. Neurochem.">
        <title>Molecular cloning and characterization of a lobster G alphaS protein expressed in neurons of olfactory organ and brain.</title>
        <authorList>
            <person name="Xu F."/>
            <person name="Hollins B."/>
            <person name="Gress A.M."/>
            <person name="Landers T.M."/>
            <person name="McClintock T.S."/>
        </authorList>
    </citation>
    <scope>NUCLEOTIDE SEQUENCE [MRNA]</scope>
    <source>
        <tissue>Olfactory organ</tissue>
    </source>
</reference>
<comment type="function">
    <text>Guanine nucleotide-binding proteins (G proteins) are involved as modulators or transducers in various transmembrane signaling systems. The G(s) protein is involved in hormonal regulation of adenylate cyclase: it activates the cyclase in response to beta-adrenergic stimuli.</text>
</comment>
<comment type="subunit">
    <text>G proteins are composed of 3 units; alpha, beta and gamma. The alpha chain contains the guanine nucleotide binding site.</text>
</comment>
<comment type="similarity">
    <text evidence="4">Belongs to the G-alpha family. G(s) subfamily.</text>
</comment>